<evidence type="ECO:0000250" key="1"/>
<evidence type="ECO:0000255" key="2">
    <source>
        <dbReference type="HAMAP-Rule" id="MF_00403"/>
    </source>
</evidence>
<evidence type="ECO:0000256" key="3">
    <source>
        <dbReference type="SAM" id="MobiDB-lite"/>
    </source>
</evidence>
<evidence type="ECO:0000305" key="4"/>
<reference key="1">
    <citation type="submission" date="2006-12" db="EMBL/GenBank/DDBJ databases">
        <title>Complete sequence of Halorhodospira halophila SL1.</title>
        <authorList>
            <consortium name="US DOE Joint Genome Institute"/>
            <person name="Copeland A."/>
            <person name="Lucas S."/>
            <person name="Lapidus A."/>
            <person name="Barry K."/>
            <person name="Detter J.C."/>
            <person name="Glavina del Rio T."/>
            <person name="Hammon N."/>
            <person name="Israni S."/>
            <person name="Dalin E."/>
            <person name="Tice H."/>
            <person name="Pitluck S."/>
            <person name="Saunders E."/>
            <person name="Brettin T."/>
            <person name="Bruce D."/>
            <person name="Han C."/>
            <person name="Tapia R."/>
            <person name="Schmutz J."/>
            <person name="Larimer F."/>
            <person name="Land M."/>
            <person name="Hauser L."/>
            <person name="Kyrpides N."/>
            <person name="Mikhailova N."/>
            <person name="Hoff W."/>
            <person name="Richardson P."/>
        </authorList>
    </citation>
    <scope>NUCLEOTIDE SEQUENCE [LARGE SCALE GENOMIC DNA]</scope>
    <source>
        <strain>DSM 244 / SL1</strain>
    </source>
</reference>
<proteinExistence type="inferred from homology"/>
<dbReference type="EMBL" id="CP000544">
    <property type="protein sequence ID" value="ABM61639.1"/>
    <property type="molecule type" value="Genomic_DNA"/>
</dbReference>
<dbReference type="RefSeq" id="WP_011813662.1">
    <property type="nucleotide sequence ID" value="NC_008789.1"/>
</dbReference>
<dbReference type="SMR" id="A1WVC7"/>
<dbReference type="STRING" id="349124.Hhal_0863"/>
<dbReference type="KEGG" id="hha:Hhal_0863"/>
<dbReference type="eggNOG" id="COG0048">
    <property type="taxonomic scope" value="Bacteria"/>
</dbReference>
<dbReference type="HOGENOM" id="CLU_104295_1_2_6"/>
<dbReference type="OrthoDB" id="9802366at2"/>
<dbReference type="Proteomes" id="UP000000647">
    <property type="component" value="Chromosome"/>
</dbReference>
<dbReference type="GO" id="GO:0015935">
    <property type="term" value="C:small ribosomal subunit"/>
    <property type="evidence" value="ECO:0007669"/>
    <property type="project" value="InterPro"/>
</dbReference>
<dbReference type="GO" id="GO:0019843">
    <property type="term" value="F:rRNA binding"/>
    <property type="evidence" value="ECO:0007669"/>
    <property type="project" value="UniProtKB-UniRule"/>
</dbReference>
<dbReference type="GO" id="GO:0003735">
    <property type="term" value="F:structural constituent of ribosome"/>
    <property type="evidence" value="ECO:0007669"/>
    <property type="project" value="InterPro"/>
</dbReference>
<dbReference type="GO" id="GO:0000049">
    <property type="term" value="F:tRNA binding"/>
    <property type="evidence" value="ECO:0007669"/>
    <property type="project" value="UniProtKB-UniRule"/>
</dbReference>
<dbReference type="GO" id="GO:0006412">
    <property type="term" value="P:translation"/>
    <property type="evidence" value="ECO:0007669"/>
    <property type="project" value="UniProtKB-UniRule"/>
</dbReference>
<dbReference type="CDD" id="cd03368">
    <property type="entry name" value="Ribosomal_S12"/>
    <property type="match status" value="1"/>
</dbReference>
<dbReference type="FunFam" id="2.40.50.140:FF:000001">
    <property type="entry name" value="30S ribosomal protein S12"/>
    <property type="match status" value="1"/>
</dbReference>
<dbReference type="Gene3D" id="2.40.50.140">
    <property type="entry name" value="Nucleic acid-binding proteins"/>
    <property type="match status" value="1"/>
</dbReference>
<dbReference type="HAMAP" id="MF_00403_B">
    <property type="entry name" value="Ribosomal_uS12_B"/>
    <property type="match status" value="1"/>
</dbReference>
<dbReference type="InterPro" id="IPR012340">
    <property type="entry name" value="NA-bd_OB-fold"/>
</dbReference>
<dbReference type="InterPro" id="IPR006032">
    <property type="entry name" value="Ribosomal_uS12"/>
</dbReference>
<dbReference type="InterPro" id="IPR005679">
    <property type="entry name" value="Ribosomal_uS12_bac"/>
</dbReference>
<dbReference type="NCBIfam" id="TIGR00981">
    <property type="entry name" value="rpsL_bact"/>
    <property type="match status" value="1"/>
</dbReference>
<dbReference type="PANTHER" id="PTHR11652">
    <property type="entry name" value="30S RIBOSOMAL PROTEIN S12 FAMILY MEMBER"/>
    <property type="match status" value="1"/>
</dbReference>
<dbReference type="Pfam" id="PF00164">
    <property type="entry name" value="Ribosom_S12_S23"/>
    <property type="match status" value="1"/>
</dbReference>
<dbReference type="PIRSF" id="PIRSF002133">
    <property type="entry name" value="Ribosomal_S12/S23"/>
    <property type="match status" value="1"/>
</dbReference>
<dbReference type="PRINTS" id="PR01034">
    <property type="entry name" value="RIBOSOMALS12"/>
</dbReference>
<dbReference type="SUPFAM" id="SSF50249">
    <property type="entry name" value="Nucleic acid-binding proteins"/>
    <property type="match status" value="1"/>
</dbReference>
<dbReference type="PROSITE" id="PS00055">
    <property type="entry name" value="RIBOSOMAL_S12"/>
    <property type="match status" value="1"/>
</dbReference>
<keyword id="KW-0488">Methylation</keyword>
<keyword id="KW-1185">Reference proteome</keyword>
<keyword id="KW-0687">Ribonucleoprotein</keyword>
<keyword id="KW-0689">Ribosomal protein</keyword>
<keyword id="KW-0694">RNA-binding</keyword>
<keyword id="KW-0699">rRNA-binding</keyword>
<keyword id="KW-0820">tRNA-binding</keyword>
<gene>
    <name evidence="2" type="primary">rpsL</name>
    <name type="ordered locus">Hhal_0863</name>
</gene>
<organism>
    <name type="scientific">Halorhodospira halophila (strain DSM 244 / SL1)</name>
    <name type="common">Ectothiorhodospira halophila (strain DSM 244 / SL1)</name>
    <dbReference type="NCBI Taxonomy" id="349124"/>
    <lineage>
        <taxon>Bacteria</taxon>
        <taxon>Pseudomonadati</taxon>
        <taxon>Pseudomonadota</taxon>
        <taxon>Gammaproteobacteria</taxon>
        <taxon>Chromatiales</taxon>
        <taxon>Ectothiorhodospiraceae</taxon>
        <taxon>Halorhodospira</taxon>
    </lineage>
</organism>
<sequence length="125" mass="13781">MATVNQLVRKGRTKRTAKSSVPALEACPQKRGVCTRVYTTTPKKPNSALRKVARVRLTNSYEVASYIGGEGHNLQEHSVVLIRGGRVKDLPGVRYHVVRGAADTAGVDKRRQGRSKYGAKRPKKK</sequence>
<protein>
    <recommendedName>
        <fullName evidence="2">Small ribosomal subunit protein uS12</fullName>
    </recommendedName>
    <alternativeName>
        <fullName evidence="4">30S ribosomal protein S12</fullName>
    </alternativeName>
</protein>
<comment type="function">
    <text evidence="2">With S4 and S5 plays an important role in translational accuracy.</text>
</comment>
<comment type="function">
    <text evidence="2">Interacts with and stabilizes bases of the 16S rRNA that are involved in tRNA selection in the A site and with the mRNA backbone. Located at the interface of the 30S and 50S subunits, it traverses the body of the 30S subunit contacting proteins on the other side and probably holding the rRNA structure together. The combined cluster of proteins S8, S12 and S17 appears to hold together the shoulder and platform of the 30S subunit.</text>
</comment>
<comment type="subunit">
    <text evidence="2">Part of the 30S ribosomal subunit. Contacts proteins S8 and S17. May interact with IF1 in the 30S initiation complex.</text>
</comment>
<comment type="similarity">
    <text evidence="2">Belongs to the universal ribosomal protein uS12 family.</text>
</comment>
<feature type="chain" id="PRO_0000295983" description="Small ribosomal subunit protein uS12">
    <location>
        <begin position="1"/>
        <end position="125"/>
    </location>
</feature>
<feature type="region of interest" description="Disordered" evidence="3">
    <location>
        <begin position="1"/>
        <end position="23"/>
    </location>
</feature>
<feature type="region of interest" description="Disordered" evidence="3">
    <location>
        <begin position="102"/>
        <end position="125"/>
    </location>
</feature>
<feature type="compositionally biased region" description="Basic residues" evidence="3">
    <location>
        <begin position="111"/>
        <end position="125"/>
    </location>
</feature>
<feature type="modified residue" description="3-methylthioaspartic acid" evidence="1">
    <location>
        <position position="89"/>
    </location>
</feature>
<name>RS12_HALHL</name>
<accession>A1WVC7</accession>